<comment type="function">
    <text evidence="1">Produces ATP from ADP in the presence of a proton gradient across the membrane. The catalytic sites are hosted primarily by the beta subunits.</text>
</comment>
<comment type="catalytic activity">
    <reaction evidence="1">
        <text>ATP + H2O + 4 H(+)(in) = ADP + phosphate + 5 H(+)(out)</text>
        <dbReference type="Rhea" id="RHEA:57720"/>
        <dbReference type="ChEBI" id="CHEBI:15377"/>
        <dbReference type="ChEBI" id="CHEBI:15378"/>
        <dbReference type="ChEBI" id="CHEBI:30616"/>
        <dbReference type="ChEBI" id="CHEBI:43474"/>
        <dbReference type="ChEBI" id="CHEBI:456216"/>
        <dbReference type="EC" id="7.1.2.2"/>
    </reaction>
</comment>
<comment type="subunit">
    <text evidence="1">F-type ATPases have 2 components, CF(1) - the catalytic core - and CF(0) - the membrane proton channel. CF(1) has five subunits: alpha(3), beta(3), gamma(1), delta(1), epsilon(1). CF(0) has four main subunits: a(1), b(1), b'(1) and c(9-12).</text>
</comment>
<comment type="subcellular location">
    <subcellularLocation>
        <location evidence="1">Plastid</location>
        <location evidence="1">Chloroplast thylakoid membrane</location>
        <topology evidence="1">Peripheral membrane protein</topology>
    </subcellularLocation>
</comment>
<comment type="similarity">
    <text evidence="1">Belongs to the ATPase alpha/beta chains family.</text>
</comment>
<feature type="chain" id="PRO_0000144525" description="ATP synthase subunit beta, chloroplastic">
    <location>
        <begin position="1"/>
        <end position="481"/>
    </location>
</feature>
<feature type="binding site" evidence="1">
    <location>
        <begin position="161"/>
        <end position="168"/>
    </location>
    <ligand>
        <name>ATP</name>
        <dbReference type="ChEBI" id="CHEBI:30616"/>
    </ligand>
</feature>
<accession>Q9MUT5</accession>
<geneLocation type="chloroplast"/>
<gene>
    <name evidence="1" type="primary">atpB</name>
</gene>
<dbReference type="EC" id="7.1.2.2" evidence="1"/>
<dbReference type="EMBL" id="AF166114">
    <property type="protein sequence ID" value="AAF43816.1"/>
    <property type="molecule type" value="Genomic_DNA"/>
</dbReference>
<dbReference type="RefSeq" id="NP_038375.1">
    <property type="nucleotide sequence ID" value="NC_002186.1"/>
</dbReference>
<dbReference type="SMR" id="Q9MUT5"/>
<dbReference type="GeneID" id="800861"/>
<dbReference type="GO" id="GO:0009535">
    <property type="term" value="C:chloroplast thylakoid membrane"/>
    <property type="evidence" value="ECO:0007669"/>
    <property type="project" value="UniProtKB-SubCell"/>
</dbReference>
<dbReference type="GO" id="GO:0005739">
    <property type="term" value="C:mitochondrion"/>
    <property type="evidence" value="ECO:0007669"/>
    <property type="project" value="GOC"/>
</dbReference>
<dbReference type="GO" id="GO:0045259">
    <property type="term" value="C:proton-transporting ATP synthase complex"/>
    <property type="evidence" value="ECO:0007669"/>
    <property type="project" value="UniProtKB-KW"/>
</dbReference>
<dbReference type="GO" id="GO:0005524">
    <property type="term" value="F:ATP binding"/>
    <property type="evidence" value="ECO:0007669"/>
    <property type="project" value="UniProtKB-UniRule"/>
</dbReference>
<dbReference type="GO" id="GO:0016887">
    <property type="term" value="F:ATP hydrolysis activity"/>
    <property type="evidence" value="ECO:0007669"/>
    <property type="project" value="InterPro"/>
</dbReference>
<dbReference type="GO" id="GO:0046933">
    <property type="term" value="F:proton-transporting ATP synthase activity, rotational mechanism"/>
    <property type="evidence" value="ECO:0007669"/>
    <property type="project" value="UniProtKB-UniRule"/>
</dbReference>
<dbReference type="GO" id="GO:0042776">
    <property type="term" value="P:proton motive force-driven mitochondrial ATP synthesis"/>
    <property type="evidence" value="ECO:0007669"/>
    <property type="project" value="TreeGrafter"/>
</dbReference>
<dbReference type="CDD" id="cd18110">
    <property type="entry name" value="ATP-synt_F1_beta_C"/>
    <property type="match status" value="1"/>
</dbReference>
<dbReference type="CDD" id="cd18115">
    <property type="entry name" value="ATP-synt_F1_beta_N"/>
    <property type="match status" value="1"/>
</dbReference>
<dbReference type="CDD" id="cd01133">
    <property type="entry name" value="F1-ATPase_beta_CD"/>
    <property type="match status" value="1"/>
</dbReference>
<dbReference type="FunFam" id="1.10.1140.10:FF:000001">
    <property type="entry name" value="ATP synthase subunit beta"/>
    <property type="match status" value="1"/>
</dbReference>
<dbReference type="FunFam" id="3.40.50.12240:FF:000006">
    <property type="entry name" value="ATP synthase subunit beta"/>
    <property type="match status" value="1"/>
</dbReference>
<dbReference type="FunFam" id="3.40.50.300:FF:000004">
    <property type="entry name" value="ATP synthase subunit beta"/>
    <property type="match status" value="1"/>
</dbReference>
<dbReference type="FunFam" id="2.40.10.170:FF:000002">
    <property type="entry name" value="ATP synthase subunit beta, chloroplastic"/>
    <property type="match status" value="1"/>
</dbReference>
<dbReference type="Gene3D" id="2.40.10.170">
    <property type="match status" value="1"/>
</dbReference>
<dbReference type="Gene3D" id="1.10.1140.10">
    <property type="entry name" value="Bovine Mitochondrial F1-atpase, Atp Synthase Beta Chain, Chain D, domain 3"/>
    <property type="match status" value="1"/>
</dbReference>
<dbReference type="Gene3D" id="3.40.50.300">
    <property type="entry name" value="P-loop containing nucleotide triphosphate hydrolases"/>
    <property type="match status" value="1"/>
</dbReference>
<dbReference type="HAMAP" id="MF_01347">
    <property type="entry name" value="ATP_synth_beta_bact"/>
    <property type="match status" value="1"/>
</dbReference>
<dbReference type="InterPro" id="IPR003593">
    <property type="entry name" value="AAA+_ATPase"/>
</dbReference>
<dbReference type="InterPro" id="IPR055190">
    <property type="entry name" value="ATP-synt_VA_C"/>
</dbReference>
<dbReference type="InterPro" id="IPR005722">
    <property type="entry name" value="ATP_synth_F1_bsu"/>
</dbReference>
<dbReference type="InterPro" id="IPR020003">
    <property type="entry name" value="ATPase_a/bsu_AS"/>
</dbReference>
<dbReference type="InterPro" id="IPR050053">
    <property type="entry name" value="ATPase_alpha/beta_chains"/>
</dbReference>
<dbReference type="InterPro" id="IPR004100">
    <property type="entry name" value="ATPase_F1/V1/A1_a/bsu_N"/>
</dbReference>
<dbReference type="InterPro" id="IPR036121">
    <property type="entry name" value="ATPase_F1/V1/A1_a/bsu_N_sf"/>
</dbReference>
<dbReference type="InterPro" id="IPR000194">
    <property type="entry name" value="ATPase_F1/V1/A1_a/bsu_nucl-bd"/>
</dbReference>
<dbReference type="InterPro" id="IPR024034">
    <property type="entry name" value="ATPase_F1/V1_b/a_C"/>
</dbReference>
<dbReference type="InterPro" id="IPR027417">
    <property type="entry name" value="P-loop_NTPase"/>
</dbReference>
<dbReference type="NCBIfam" id="TIGR01039">
    <property type="entry name" value="atpD"/>
    <property type="match status" value="1"/>
</dbReference>
<dbReference type="PANTHER" id="PTHR15184">
    <property type="entry name" value="ATP SYNTHASE"/>
    <property type="match status" value="1"/>
</dbReference>
<dbReference type="PANTHER" id="PTHR15184:SF71">
    <property type="entry name" value="ATP SYNTHASE SUBUNIT BETA, MITOCHONDRIAL"/>
    <property type="match status" value="1"/>
</dbReference>
<dbReference type="Pfam" id="PF00006">
    <property type="entry name" value="ATP-synt_ab"/>
    <property type="match status" value="1"/>
</dbReference>
<dbReference type="Pfam" id="PF02874">
    <property type="entry name" value="ATP-synt_ab_N"/>
    <property type="match status" value="1"/>
</dbReference>
<dbReference type="Pfam" id="PF22919">
    <property type="entry name" value="ATP-synt_VA_C"/>
    <property type="match status" value="1"/>
</dbReference>
<dbReference type="SMART" id="SM00382">
    <property type="entry name" value="AAA"/>
    <property type="match status" value="1"/>
</dbReference>
<dbReference type="SUPFAM" id="SSF47917">
    <property type="entry name" value="C-terminal domain of alpha and beta subunits of F1 ATP synthase"/>
    <property type="match status" value="1"/>
</dbReference>
<dbReference type="SUPFAM" id="SSF50615">
    <property type="entry name" value="N-terminal domain of alpha and beta subunits of F1 ATP synthase"/>
    <property type="match status" value="1"/>
</dbReference>
<dbReference type="SUPFAM" id="SSF52540">
    <property type="entry name" value="P-loop containing nucleoside triphosphate hydrolases"/>
    <property type="match status" value="1"/>
</dbReference>
<dbReference type="PROSITE" id="PS00152">
    <property type="entry name" value="ATPASE_ALPHA_BETA"/>
    <property type="match status" value="1"/>
</dbReference>
<proteinExistence type="inferred from homology"/>
<keyword id="KW-0066">ATP synthesis</keyword>
<keyword id="KW-0067">ATP-binding</keyword>
<keyword id="KW-0139">CF(1)</keyword>
<keyword id="KW-0150">Chloroplast</keyword>
<keyword id="KW-0375">Hydrogen ion transport</keyword>
<keyword id="KW-0406">Ion transport</keyword>
<keyword id="KW-0472">Membrane</keyword>
<keyword id="KW-0547">Nucleotide-binding</keyword>
<keyword id="KW-0934">Plastid</keyword>
<keyword id="KW-0793">Thylakoid</keyword>
<keyword id="KW-1278">Translocase</keyword>
<keyword id="KW-0813">Transport</keyword>
<organism>
    <name type="scientific">Mesostigma viride</name>
    <name type="common">Green alga</name>
    <dbReference type="NCBI Taxonomy" id="41882"/>
    <lineage>
        <taxon>Eukaryota</taxon>
        <taxon>Viridiplantae</taxon>
        <taxon>Streptophyta</taxon>
        <taxon>Mesostigmatophyceae</taxon>
        <taxon>Mesostigmatales</taxon>
        <taxon>Mesostigmataceae</taxon>
        <taxon>Mesostigma</taxon>
    </lineage>
</organism>
<reference key="1">
    <citation type="journal article" date="2000" name="Nature">
        <title>Ancestral chloroplast genome in Mesostigma viride reveals an early branch of green plant evolution.</title>
        <authorList>
            <person name="Lemieux C."/>
            <person name="Otis C."/>
            <person name="Turmel M."/>
        </authorList>
    </citation>
    <scope>NUCLEOTIDE SEQUENCE [LARGE SCALE GENOMIC DNA]</scope>
    <source>
        <strain>NIES-296 / KY-14 / CCMP 2046</strain>
    </source>
</reference>
<evidence type="ECO:0000255" key="1">
    <source>
        <dbReference type="HAMAP-Rule" id="MF_01347"/>
    </source>
</evidence>
<protein>
    <recommendedName>
        <fullName evidence="1">ATP synthase subunit beta, chloroplastic</fullName>
        <ecNumber evidence="1">7.1.2.2</ecNumber>
    </recommendedName>
    <alternativeName>
        <fullName evidence="1">ATP synthase F1 sector subunit beta</fullName>
    </alternativeName>
    <alternativeName>
        <fullName evidence="1">F-ATPase subunit beta</fullName>
    </alternativeName>
</protein>
<name>ATPB_MESVI</name>
<sequence length="481" mass="52023">MTAIETKRIGSITQIIGPVLDAKFPPGQMPNIYNALIVKAKNEAGEDLSVTCEVQQLLGDNQVRAVAMSATDGLMRGLEILDTGAPLSVPVGEITLGRIFNVLGEPVDGLGDVVAKTKSPIHRNSPTFIELDTKLSIFETGIKVVDLLAPYRRGGKIGLFGGAGVGKTVLIMELINNIAKAHGGVSVFGGVGERTREGNDLYMEMKESKVINEENLSSSKVALVYGQMNEPPGARMRVGLTALTMAEYFRDVNNQDVLLFIDNIFRFVQAGSEVSALLGRMPSAVGYQPTLSREMGTLQERITSTKQGSITSIQAVYVPADDLTDPAPATTFAHLDATTVLSRNLAAKGIYPAVDPLDSTSTMLQPWIVGEEHYGTAQRVKQTLQRYKELQDIIAILGLDELSEEDRLVVARARKIERFLSQPFFVAEVFTGSPGKYVSLADSIKGFTMILNGELDSLPEQAFYLVGNIEEAIAKAATLKE</sequence>